<evidence type="ECO:0000255" key="1">
    <source>
        <dbReference type="HAMAP-Rule" id="MF_00148"/>
    </source>
</evidence>
<feature type="chain" id="PRO_1000199761" description="Uracil-DNA glycosylase">
    <location>
        <begin position="1"/>
        <end position="225"/>
    </location>
</feature>
<feature type="active site" description="Proton acceptor" evidence="1">
    <location>
        <position position="65"/>
    </location>
</feature>
<reference key="1">
    <citation type="journal article" date="2008" name="Genome Biol.">
        <title>Encapsulated in silica: genome, proteome and physiology of the thermophilic bacterium Anoxybacillus flavithermus WK1.</title>
        <authorList>
            <person name="Saw J.H."/>
            <person name="Mountain B.W."/>
            <person name="Feng L."/>
            <person name="Omelchenko M.V."/>
            <person name="Hou S."/>
            <person name="Saito J.A."/>
            <person name="Stott M.B."/>
            <person name="Li D."/>
            <person name="Zhao G."/>
            <person name="Wu J."/>
            <person name="Galperin M.Y."/>
            <person name="Koonin E.V."/>
            <person name="Makarova K.S."/>
            <person name="Wolf Y.I."/>
            <person name="Rigden D.J."/>
            <person name="Dunfield P.F."/>
            <person name="Wang L."/>
            <person name="Alam M."/>
        </authorList>
    </citation>
    <scope>NUCLEOTIDE SEQUENCE [LARGE SCALE GENOMIC DNA]</scope>
    <source>
        <strain>DSM 21510 / WK1</strain>
    </source>
</reference>
<keyword id="KW-0963">Cytoplasm</keyword>
<keyword id="KW-0227">DNA damage</keyword>
<keyword id="KW-0234">DNA repair</keyword>
<keyword id="KW-0378">Hydrolase</keyword>
<gene>
    <name evidence="1" type="primary">ung</name>
    <name type="ordered locus">Aflv_2770</name>
</gene>
<name>UNG_ANOFW</name>
<proteinExistence type="inferred from homology"/>
<sequence length="225" mass="25992">MMSILKNDWAPLLQEEFQKPYYVKLRQFLKEEYRTKTIYPDMHDIFNALHYTPYANVKVVILGQDPYHGPNQAHGLSFSVKPGVALPPSLLNIFKELQDDLGCYIPNNGYLLKWAKQGVLLLNTVLTVRRGEANSHKGKGWEYFTDRVIELVNEKREPVVFILWGRHAQAKKALITNEHHYIIEAPHPSPFSAARGFFGSRPFSKTNAFLQQTGREPIDWQIENI</sequence>
<accession>B7GMM1</accession>
<protein>
    <recommendedName>
        <fullName evidence="1">Uracil-DNA glycosylase</fullName>
        <shortName evidence="1">UDG</shortName>
        <ecNumber evidence="1">3.2.2.27</ecNumber>
    </recommendedName>
</protein>
<dbReference type="EC" id="3.2.2.27" evidence="1"/>
<dbReference type="EMBL" id="CP000922">
    <property type="protein sequence ID" value="ACJ35123.1"/>
    <property type="molecule type" value="Genomic_DNA"/>
</dbReference>
<dbReference type="SMR" id="B7GMM1"/>
<dbReference type="STRING" id="491915.Aflv_2770"/>
<dbReference type="KEGG" id="afl:Aflv_2770"/>
<dbReference type="eggNOG" id="COG0692">
    <property type="taxonomic scope" value="Bacteria"/>
</dbReference>
<dbReference type="HOGENOM" id="CLU_032162_3_1_9"/>
<dbReference type="Proteomes" id="UP000000742">
    <property type="component" value="Chromosome"/>
</dbReference>
<dbReference type="GO" id="GO:0005737">
    <property type="term" value="C:cytoplasm"/>
    <property type="evidence" value="ECO:0007669"/>
    <property type="project" value="UniProtKB-SubCell"/>
</dbReference>
<dbReference type="GO" id="GO:0004844">
    <property type="term" value="F:uracil DNA N-glycosylase activity"/>
    <property type="evidence" value="ECO:0007669"/>
    <property type="project" value="UniProtKB-UniRule"/>
</dbReference>
<dbReference type="GO" id="GO:0097510">
    <property type="term" value="P:base-excision repair, AP site formation via deaminated base removal"/>
    <property type="evidence" value="ECO:0007669"/>
    <property type="project" value="TreeGrafter"/>
</dbReference>
<dbReference type="CDD" id="cd10027">
    <property type="entry name" value="UDG-F1-like"/>
    <property type="match status" value="1"/>
</dbReference>
<dbReference type="FunFam" id="3.40.470.10:FF:000001">
    <property type="entry name" value="Uracil-DNA glycosylase"/>
    <property type="match status" value="1"/>
</dbReference>
<dbReference type="Gene3D" id="3.40.470.10">
    <property type="entry name" value="Uracil-DNA glycosylase-like domain"/>
    <property type="match status" value="1"/>
</dbReference>
<dbReference type="HAMAP" id="MF_00148">
    <property type="entry name" value="UDG"/>
    <property type="match status" value="1"/>
</dbReference>
<dbReference type="InterPro" id="IPR002043">
    <property type="entry name" value="UDG_fam1"/>
</dbReference>
<dbReference type="InterPro" id="IPR018085">
    <property type="entry name" value="Ura-DNA_Glyclase_AS"/>
</dbReference>
<dbReference type="InterPro" id="IPR005122">
    <property type="entry name" value="Uracil-DNA_glycosylase-like"/>
</dbReference>
<dbReference type="InterPro" id="IPR036895">
    <property type="entry name" value="Uracil-DNA_glycosylase-like_sf"/>
</dbReference>
<dbReference type="NCBIfam" id="NF003588">
    <property type="entry name" value="PRK05254.1-1"/>
    <property type="match status" value="1"/>
</dbReference>
<dbReference type="NCBIfam" id="NF003589">
    <property type="entry name" value="PRK05254.1-2"/>
    <property type="match status" value="1"/>
</dbReference>
<dbReference type="NCBIfam" id="NF003591">
    <property type="entry name" value="PRK05254.1-4"/>
    <property type="match status" value="1"/>
</dbReference>
<dbReference type="NCBIfam" id="NF003592">
    <property type="entry name" value="PRK05254.1-5"/>
    <property type="match status" value="1"/>
</dbReference>
<dbReference type="NCBIfam" id="TIGR00628">
    <property type="entry name" value="ung"/>
    <property type="match status" value="1"/>
</dbReference>
<dbReference type="PANTHER" id="PTHR11264">
    <property type="entry name" value="URACIL-DNA GLYCOSYLASE"/>
    <property type="match status" value="1"/>
</dbReference>
<dbReference type="PANTHER" id="PTHR11264:SF0">
    <property type="entry name" value="URACIL-DNA GLYCOSYLASE"/>
    <property type="match status" value="1"/>
</dbReference>
<dbReference type="Pfam" id="PF03167">
    <property type="entry name" value="UDG"/>
    <property type="match status" value="1"/>
</dbReference>
<dbReference type="SMART" id="SM00986">
    <property type="entry name" value="UDG"/>
    <property type="match status" value="1"/>
</dbReference>
<dbReference type="SMART" id="SM00987">
    <property type="entry name" value="UreE_C"/>
    <property type="match status" value="1"/>
</dbReference>
<dbReference type="SUPFAM" id="SSF52141">
    <property type="entry name" value="Uracil-DNA glycosylase-like"/>
    <property type="match status" value="1"/>
</dbReference>
<dbReference type="PROSITE" id="PS00130">
    <property type="entry name" value="U_DNA_GLYCOSYLASE"/>
    <property type="match status" value="1"/>
</dbReference>
<comment type="function">
    <text evidence="1">Excises uracil residues from the DNA which can arise as a result of misincorporation of dUMP residues by DNA polymerase or due to deamination of cytosine.</text>
</comment>
<comment type="catalytic activity">
    <reaction evidence="1">
        <text>Hydrolyzes single-stranded DNA or mismatched double-stranded DNA and polynucleotides, releasing free uracil.</text>
        <dbReference type="EC" id="3.2.2.27"/>
    </reaction>
</comment>
<comment type="subcellular location">
    <subcellularLocation>
        <location evidence="1">Cytoplasm</location>
    </subcellularLocation>
</comment>
<comment type="similarity">
    <text evidence="1">Belongs to the uracil-DNA glycosylase (UDG) superfamily. UNG family.</text>
</comment>
<organism>
    <name type="scientific">Anoxybacillus flavithermus (strain DSM 21510 / WK1)</name>
    <dbReference type="NCBI Taxonomy" id="491915"/>
    <lineage>
        <taxon>Bacteria</taxon>
        <taxon>Bacillati</taxon>
        <taxon>Bacillota</taxon>
        <taxon>Bacilli</taxon>
        <taxon>Bacillales</taxon>
        <taxon>Anoxybacillaceae</taxon>
        <taxon>Anoxybacillus</taxon>
    </lineage>
</organism>